<organism>
    <name type="scientific">Danio rerio</name>
    <name type="common">Zebrafish</name>
    <name type="synonym">Brachydanio rerio</name>
    <dbReference type="NCBI Taxonomy" id="7955"/>
    <lineage>
        <taxon>Eukaryota</taxon>
        <taxon>Metazoa</taxon>
        <taxon>Chordata</taxon>
        <taxon>Craniata</taxon>
        <taxon>Vertebrata</taxon>
        <taxon>Euteleostomi</taxon>
        <taxon>Actinopterygii</taxon>
        <taxon>Neopterygii</taxon>
        <taxon>Teleostei</taxon>
        <taxon>Ostariophysi</taxon>
        <taxon>Cypriniformes</taxon>
        <taxon>Danionidae</taxon>
        <taxon>Danioninae</taxon>
        <taxon>Danio</taxon>
    </lineage>
</organism>
<sequence>MNGDMPHVPITTLAGIASLTDLLNQLPLPSPLPATTTKSLLYNGRIAEEVSCLLSRRDDALVSQLAHSLNQVSTEHIELKDNLGSDDPEGDVPLLLQTVLSRNPNVFREKSLMQQPMIPSYKMPQNSMHGSPASNYQQTTITPSPPSRYVQTQAGSGSRYMPQQNSPVPSPYAPQSPAGYMQYSHPPSYPQHQPIQQVSVSSPIVPSGMRNIHDNKVSGQVSGNSNHNARHCSSDEYINIVQRLGNDEGDPAMRNTSFPVRSACSPAGSEGTPKVGPRPPLILQSPPPYTSPSDTAPDLLLDSPERKKKQKRLLKEEGGKGAMYGIVSSPSKDSTKLTIKLSRVKSSETEQSAEPVVPVVDHGSDAENEVSCNSLSYHRNPQERLSAGQCLSGEQSAYQQVPVLQNIGALAAKQPGVVSGTPYDEAELDALAEIERIERESAIERERCSKEVQDKDKPLKKRKQDSYPQEPGAAGTAGASGTPGVGGGCNAGNKLVPQEACAASNGSSRPALMVSIDLQQAGRVEGPVDSCPVPATEAQRWTEDGSESTGVLRLKSKTDGEVQRTVDGRPEVIKQRVETTPQKTAVDGRPETPINKHENRREISNKVSSEKRSDLSKHRHDGKAEKIRAEGKGHETSRKHEGRSELSRDCKEERHREKDSDSSKGRRSDTSKSSRVEHNRDKEQEQEKVGDKGLEKGREKELEKGRDKERVKDQEKDQEKGRDKEVEKGRYKERVKDRVKEQEKVRDKEQVKGRDKKRSKDLEKCREKDQDKELEKDREKNQDKELEKGREKDQDKELEKGREKDRDKEMEKAREKDQDKELEKGREKDQDKELEKGQEKDRDKVREKDRDKVRDKDRDKVREKDRDKVREKDRDKLREKDREKIRERDRDKGREKDRDKEQVKTREKDQEKERLKDRDKEREKVRDKGRDRDRDQEKKRNKELTEDKQAPEQRSRPNSPRVKQEPRNGEESKIKPERSVHKNSNNKDEKRGGENKNQLDGHKPQSIDSKTADFPNYLLGGKSSALKNFVIPKLKRDKEGNVMQEVRIELFSEPRVKLEKLDLVEDLNKGAKPVVVLKKLSIDEVQKMISNSRSSKSSRSSHGRFRETDSRLPLCERVKMNKRRRSSTNEKPKYAEVSSDDDSSSSVEIAPKRSKKDRDKTWEYEEKDRRGSGDHRRSFDSRRSSGGRHRERSPEDSDEDSPPPSLSDLARKLKKKEKQKKRKAYEPKLTVDEMMDSSTFKRFTTSVDNILDNLEDVDLTSLDDDEIPQELLLGKHQLSELSSESAKIKAMGIMHKITHDKMVKVQSILEKNIQDGAKLSTLMNHDNDRDDEERLWRDLIMERVTKSADACLTALNIMTSARMPKAVYIEDVIERVVQYTKFHLQNTLYPQYDPVYRVDHHGGGTLSSKAKRAKCSTHKQRVTVMLYNKVCDIISNLSELLEIQLLTDTTILQISSLGITPFFVENVSELQLCAIKLVTAVFSRYEKHRQLILEEIFTSLARLPTSKRNLRNYRLNSSDVDGEPMYIQMVTALVLQLIQCVVNLPSDKDSDEENDRKVDHDVLITNSYETAMRTAQNFLSVFLKKCGSKQGEDDYRPLFENFVQDLLSTVNKPDWPAAELLLSLLGRLLVHQFSNKQTEMALRVASLDYLGTVAARLRKDAVTSKMDQRSINRILGENSGSDEIQQLQKALLNYLDENVETDPFLLFARKFYLAQWYRDTSTETEKAMKSQRDDDSSDGPHHAKDVETTSEILQKAEARKKFLRSVIKTTASKFSSLRVNSDTVDYEDSCLIVRYLASMRPFAQSFDIYLTQILRVLGESAIAVRTKAMKCLSEVVAVDPSILARLDMQRGVHGRLMDNSTSVREAAVELLGRFVLSRPQLTEQYYDMLIERILDTGISVRKRVIKILRDICLEQPTFNKVTEMCVKMIRRVNDEEGIKKLVNETFQKLWFTPTPNHDKEAMTRKILNITDVVAACRDSGYDWFEQLLQNLLKSEEDASYKPARKACAQLVDSLVEHILKYEESLADCENKGLTSNRLVACITTLYLFSKIRPHLMVKHAMTMQPYLTTKCNTQSDFMVICNVAKILELVVPLMDHPSESFLTTIEEDLMKLIIKYGMTVVQHCVSCLGAVVNRVTHNYKFVWSCFNRYYGALSKLKMQHQEDPNSTVLVSNKPALLRSLFTVGALCRHFDFDQEEFKGSNKVVIKDKVLELLLYFTKNDDEEVQTKAIIGLGFLFIQDPGLMFVTEVKNLYNTLLADRKTSVNLKIQVLKNLQTYLQEEDSRMQEADREWNKLSKKEDLKEMGDISSGMSSSIMQLYLKQVLEAFFHTQSSVRHYALNVIALTLNQGLIHPVQCVPYLIAMGTDSEPTMRNKADQQLVEIDKKYTGFIHMKAVAGMKMSYQVQQAIVGSKDTVIRGFRLDESSTALCSHLYTMVRGNRQHRRAFLISLLNLFDDNTKSDVNMLLYIADNLASFPYQTQEEPMFIMHHVDITLSVSGSNLLQSFKESLLKEPRKVEVVKKKKKKKKKKKQKQKRGKKYGSEEEDESSRSSSSSSSSSSSSSDSDSSEEEVIHRRKKPRRTTANSDSDSDLDVEDVDKVMLRLPDNPEPLLDFANASQGILLLLMLKQHLKNLYGFSDSKIQKYSPTESAKIYDKAVNRKANVHFNPRQTLDYLTNSLSNSDLSNDVKRRVVRQYLDFKVLMEHLDPDEEEEEGEASASSHARNKAINALLGGSSPKNNAAESYDDDSEVEEKTPGSSRRSRRTGDSAEASGHRNETVEATDVIALCCPKYKDRPQIARVIQKTSKGYSIHWMAGSYSGTWAEAKKRDGRKLVPWVDTIKESDIIYKKIALTSAHKLSNKVVQTLRSLYAAKEGSSS</sequence>
<gene>
    <name type="primary">nipblb</name>
</gene>
<name>NIPLB_DANRE</name>
<dbReference type="EMBL" id="AB630365">
    <property type="protein sequence ID" value="BAK23967.1"/>
    <property type="molecule type" value="mRNA"/>
</dbReference>
<dbReference type="EMBL" id="AL929053">
    <property type="status" value="NOT_ANNOTATED_CDS"/>
    <property type="molecule type" value="Genomic_DNA"/>
</dbReference>
<dbReference type="EMBL" id="BX548163">
    <property type="status" value="NOT_ANNOTATED_CDS"/>
    <property type="molecule type" value="Genomic_DNA"/>
</dbReference>
<dbReference type="EMBL" id="BC129432">
    <property type="protein sequence ID" value="AAI29433.1"/>
    <property type="status" value="ALT_SEQ"/>
    <property type="molecule type" value="mRNA"/>
</dbReference>
<dbReference type="RefSeq" id="NP_001154919.2">
    <molecule id="F1QBY1-1"/>
    <property type="nucleotide sequence ID" value="NM_001161447.2"/>
</dbReference>
<dbReference type="SMR" id="F1QBY1"/>
<dbReference type="BioGRID" id="658773">
    <property type="interactions" value="1"/>
</dbReference>
<dbReference type="FunCoup" id="F1QBY1">
    <property type="interactions" value="2136"/>
</dbReference>
<dbReference type="STRING" id="7955.ENSDARP00000081295"/>
<dbReference type="PaxDb" id="7955-ENSDARP00000081295"/>
<dbReference type="Ensembl" id="ENSDART00000108484">
    <molecule id="F1QBY1-1"/>
    <property type="protein sequence ID" value="ENSDARP00000098849"/>
    <property type="gene ID" value="ENSDARG00000061052"/>
</dbReference>
<dbReference type="GeneID" id="794108"/>
<dbReference type="KEGG" id="dre:794108"/>
<dbReference type="AGR" id="ZFIN:ZDB-GENE-030131-6070"/>
<dbReference type="CTD" id="794108"/>
<dbReference type="ZFIN" id="ZDB-GENE-030131-6070">
    <property type="gene designation" value="nipblb"/>
</dbReference>
<dbReference type="eggNOG" id="KOG1020">
    <property type="taxonomic scope" value="Eukaryota"/>
</dbReference>
<dbReference type="HOGENOM" id="CLU_000763_0_0_1"/>
<dbReference type="InParanoid" id="F1QBY1"/>
<dbReference type="OMA" id="FGEMDSR"/>
<dbReference type="OrthoDB" id="418242at2759"/>
<dbReference type="TreeFam" id="TF313121"/>
<dbReference type="PRO" id="PR:F1QBY1"/>
<dbReference type="Proteomes" id="UP000000437">
    <property type="component" value="Alternate scaffold 10"/>
</dbReference>
<dbReference type="Proteomes" id="UP000000437">
    <property type="component" value="Chromosome 10"/>
</dbReference>
<dbReference type="Bgee" id="ENSDARG00000061052">
    <property type="expression patterns" value="Expressed in somite and 36 other cell types or tissues"/>
</dbReference>
<dbReference type="GO" id="GO:0090694">
    <property type="term" value="C:Scc2-Scc4 cohesin loading complex"/>
    <property type="evidence" value="ECO:0000318"/>
    <property type="project" value="GO_Central"/>
</dbReference>
<dbReference type="GO" id="GO:0003682">
    <property type="term" value="F:chromatin binding"/>
    <property type="evidence" value="ECO:0000318"/>
    <property type="project" value="GO_Central"/>
</dbReference>
<dbReference type="GO" id="GO:0140587">
    <property type="term" value="F:chromatin loop anchoring activity"/>
    <property type="evidence" value="ECO:0000316"/>
    <property type="project" value="ZFIN"/>
</dbReference>
<dbReference type="GO" id="GO:0061775">
    <property type="term" value="F:cohesin loader activity"/>
    <property type="evidence" value="ECO:0007669"/>
    <property type="project" value="InterPro"/>
</dbReference>
<dbReference type="GO" id="GO:0007420">
    <property type="term" value="P:brain development"/>
    <property type="evidence" value="ECO:0000318"/>
    <property type="project" value="GO_Central"/>
</dbReference>
<dbReference type="GO" id="GO:0007417">
    <property type="term" value="P:central nervous system development"/>
    <property type="evidence" value="ECO:0000315"/>
    <property type="project" value="ZFIN"/>
</dbReference>
<dbReference type="GO" id="GO:0140588">
    <property type="term" value="P:chromatin looping"/>
    <property type="evidence" value="ECO:0007669"/>
    <property type="project" value="InterPro"/>
</dbReference>
<dbReference type="GO" id="GO:0048589">
    <property type="term" value="P:developmental growth"/>
    <property type="evidence" value="ECO:0000316"/>
    <property type="project" value="ZFIN"/>
</dbReference>
<dbReference type="GO" id="GO:0048565">
    <property type="term" value="P:digestive tract development"/>
    <property type="evidence" value="ECO:0000316"/>
    <property type="project" value="ZFIN"/>
</dbReference>
<dbReference type="GO" id="GO:0035118">
    <property type="term" value="P:embryonic pectoral fin morphogenesis"/>
    <property type="evidence" value="ECO:0000316"/>
    <property type="project" value="ZFIN"/>
</dbReference>
<dbReference type="GO" id="GO:0048703">
    <property type="term" value="P:embryonic viscerocranium morphogenesis"/>
    <property type="evidence" value="ECO:0000316"/>
    <property type="project" value="ZFIN"/>
</dbReference>
<dbReference type="GO" id="GO:0034087">
    <property type="term" value="P:establishment of mitotic sister chromatid cohesion"/>
    <property type="evidence" value="ECO:0000318"/>
    <property type="project" value="GO_Central"/>
</dbReference>
<dbReference type="GO" id="GO:0071169">
    <property type="term" value="P:establishment of protein localization to chromatin"/>
    <property type="evidence" value="ECO:0000318"/>
    <property type="project" value="GO_Central"/>
</dbReference>
<dbReference type="GO" id="GO:0007507">
    <property type="term" value="P:heart development"/>
    <property type="evidence" value="ECO:0000316"/>
    <property type="project" value="ZFIN"/>
</dbReference>
<dbReference type="GO" id="GO:0003146">
    <property type="term" value="P:heart jogging"/>
    <property type="evidence" value="ECO:0000316"/>
    <property type="project" value="ZFIN"/>
</dbReference>
<dbReference type="GO" id="GO:0003007">
    <property type="term" value="P:heart morphogenesis"/>
    <property type="evidence" value="ECO:0000318"/>
    <property type="project" value="GO_Central"/>
</dbReference>
<dbReference type="GO" id="GO:0007064">
    <property type="term" value="P:mitotic sister chromatid cohesion"/>
    <property type="evidence" value="ECO:0000250"/>
    <property type="project" value="UniProtKB"/>
</dbReference>
<dbReference type="GO" id="GO:0070050">
    <property type="term" value="P:neuron cellular homeostasis"/>
    <property type="evidence" value="ECO:0000315"/>
    <property type="project" value="ZFIN"/>
</dbReference>
<dbReference type="GO" id="GO:0060828">
    <property type="term" value="P:regulation of canonical Wnt signaling pathway"/>
    <property type="evidence" value="ECO:0000315"/>
    <property type="project" value="ZFIN"/>
</dbReference>
<dbReference type="GO" id="GO:0010468">
    <property type="term" value="P:regulation of gene expression"/>
    <property type="evidence" value="ECO:0007669"/>
    <property type="project" value="InterPro"/>
</dbReference>
<dbReference type="GO" id="GO:1903706">
    <property type="term" value="P:regulation of hemopoiesis"/>
    <property type="evidence" value="ECO:0000315"/>
    <property type="project" value="ZFIN"/>
</dbReference>
<dbReference type="GO" id="GO:1990414">
    <property type="term" value="P:replication-born double-strand break repair via sister chromatid exchange"/>
    <property type="evidence" value="ECO:0000318"/>
    <property type="project" value="GO_Central"/>
</dbReference>
<dbReference type="CDD" id="cd23958">
    <property type="entry name" value="SCC2"/>
    <property type="match status" value="1"/>
</dbReference>
<dbReference type="FunFam" id="1.25.10.10:FF:000225">
    <property type="entry name" value="Nipped-B protein"/>
    <property type="match status" value="1"/>
</dbReference>
<dbReference type="Gene3D" id="1.25.10.10">
    <property type="entry name" value="Leucine-rich Repeat Variant"/>
    <property type="match status" value="2"/>
</dbReference>
<dbReference type="InterPro" id="IPR011989">
    <property type="entry name" value="ARM-like"/>
</dbReference>
<dbReference type="InterPro" id="IPR016024">
    <property type="entry name" value="ARM-type_fold"/>
</dbReference>
<dbReference type="InterPro" id="IPR026003">
    <property type="entry name" value="Cohesin_HEAT"/>
</dbReference>
<dbReference type="InterPro" id="IPR024986">
    <property type="entry name" value="Nipped-B_C"/>
</dbReference>
<dbReference type="InterPro" id="IPR033031">
    <property type="entry name" value="Scc2/Nipped-B"/>
</dbReference>
<dbReference type="PANTHER" id="PTHR21704:SF18">
    <property type="entry name" value="NIPPED-B-LIKE PROTEIN"/>
    <property type="match status" value="1"/>
</dbReference>
<dbReference type="PANTHER" id="PTHR21704">
    <property type="entry name" value="NIPPED-B-LIKE PROTEIN DELANGIN SCC2-RELATED"/>
    <property type="match status" value="1"/>
</dbReference>
<dbReference type="Pfam" id="PF12765">
    <property type="entry name" value="Cohesin_HEAT"/>
    <property type="match status" value="1"/>
</dbReference>
<dbReference type="Pfam" id="PF12830">
    <property type="entry name" value="Nipped-B_C"/>
    <property type="match status" value="1"/>
</dbReference>
<dbReference type="SUPFAM" id="SSF48371">
    <property type="entry name" value="ARM repeat"/>
    <property type="match status" value="2"/>
</dbReference>
<proteinExistence type="evidence at transcript level"/>
<reference key="1">
    <citation type="journal article" date="2011" name="PLoS Biol.">
        <title>Multifactorial origins of heart and gut defects in nipbl-deficient zebrafish, a model of Cornelia de Lange Syndrome.</title>
        <authorList>
            <person name="Muto A."/>
            <person name="Calof A.L."/>
            <person name="Lander A.D."/>
            <person name="Schilling T.F."/>
        </authorList>
    </citation>
    <scope>NUCLEOTIDE SEQUENCE [MRNA] (ISOFORM 1)</scope>
    <scope>FUNCTION</scope>
    <scope>DEVELOPMENTAL STAGE</scope>
</reference>
<reference key="2">
    <citation type="journal article" date="2013" name="Nature">
        <title>The zebrafish reference genome sequence and its relationship to the human genome.</title>
        <authorList>
            <person name="Howe K."/>
            <person name="Clark M.D."/>
            <person name="Torroja C.F."/>
            <person name="Torrance J."/>
            <person name="Berthelot C."/>
            <person name="Muffato M."/>
            <person name="Collins J.E."/>
            <person name="Humphray S."/>
            <person name="McLaren K."/>
            <person name="Matthews L."/>
            <person name="McLaren S."/>
            <person name="Sealy I."/>
            <person name="Caccamo M."/>
            <person name="Churcher C."/>
            <person name="Scott C."/>
            <person name="Barrett J.C."/>
            <person name="Koch R."/>
            <person name="Rauch G.J."/>
            <person name="White S."/>
            <person name="Chow W."/>
            <person name="Kilian B."/>
            <person name="Quintais L.T."/>
            <person name="Guerra-Assuncao J.A."/>
            <person name="Zhou Y."/>
            <person name="Gu Y."/>
            <person name="Yen J."/>
            <person name="Vogel J.H."/>
            <person name="Eyre T."/>
            <person name="Redmond S."/>
            <person name="Banerjee R."/>
            <person name="Chi J."/>
            <person name="Fu B."/>
            <person name="Langley E."/>
            <person name="Maguire S.F."/>
            <person name="Laird G.K."/>
            <person name="Lloyd D."/>
            <person name="Kenyon E."/>
            <person name="Donaldson S."/>
            <person name="Sehra H."/>
            <person name="Almeida-King J."/>
            <person name="Loveland J."/>
            <person name="Trevanion S."/>
            <person name="Jones M."/>
            <person name="Quail M."/>
            <person name="Willey D."/>
            <person name="Hunt A."/>
            <person name="Burton J."/>
            <person name="Sims S."/>
            <person name="McLay K."/>
            <person name="Plumb B."/>
            <person name="Davis J."/>
            <person name="Clee C."/>
            <person name="Oliver K."/>
            <person name="Clark R."/>
            <person name="Riddle C."/>
            <person name="Elliot D."/>
            <person name="Threadgold G."/>
            <person name="Harden G."/>
            <person name="Ware D."/>
            <person name="Begum S."/>
            <person name="Mortimore B."/>
            <person name="Kerry G."/>
            <person name="Heath P."/>
            <person name="Phillimore B."/>
            <person name="Tracey A."/>
            <person name="Corby N."/>
            <person name="Dunn M."/>
            <person name="Johnson C."/>
            <person name="Wood J."/>
            <person name="Clark S."/>
            <person name="Pelan S."/>
            <person name="Griffiths G."/>
            <person name="Smith M."/>
            <person name="Glithero R."/>
            <person name="Howden P."/>
            <person name="Barker N."/>
            <person name="Lloyd C."/>
            <person name="Stevens C."/>
            <person name="Harley J."/>
            <person name="Holt K."/>
            <person name="Panagiotidis G."/>
            <person name="Lovell J."/>
            <person name="Beasley H."/>
            <person name="Henderson C."/>
            <person name="Gordon D."/>
            <person name="Auger K."/>
            <person name="Wright D."/>
            <person name="Collins J."/>
            <person name="Raisen C."/>
            <person name="Dyer L."/>
            <person name="Leung K."/>
            <person name="Robertson L."/>
            <person name="Ambridge K."/>
            <person name="Leongamornlert D."/>
            <person name="McGuire S."/>
            <person name="Gilderthorp R."/>
            <person name="Griffiths C."/>
            <person name="Manthravadi D."/>
            <person name="Nichol S."/>
            <person name="Barker G."/>
            <person name="Whitehead S."/>
            <person name="Kay M."/>
            <person name="Brown J."/>
            <person name="Murnane C."/>
            <person name="Gray E."/>
            <person name="Humphries M."/>
            <person name="Sycamore N."/>
            <person name="Barker D."/>
            <person name="Saunders D."/>
            <person name="Wallis J."/>
            <person name="Babbage A."/>
            <person name="Hammond S."/>
            <person name="Mashreghi-Mohammadi M."/>
            <person name="Barr L."/>
            <person name="Martin S."/>
            <person name="Wray P."/>
            <person name="Ellington A."/>
            <person name="Matthews N."/>
            <person name="Ellwood M."/>
            <person name="Woodmansey R."/>
            <person name="Clark G."/>
            <person name="Cooper J."/>
            <person name="Tromans A."/>
            <person name="Grafham D."/>
            <person name="Skuce C."/>
            <person name="Pandian R."/>
            <person name="Andrews R."/>
            <person name="Harrison E."/>
            <person name="Kimberley A."/>
            <person name="Garnett J."/>
            <person name="Fosker N."/>
            <person name="Hall R."/>
            <person name="Garner P."/>
            <person name="Kelly D."/>
            <person name="Bird C."/>
            <person name="Palmer S."/>
            <person name="Gehring I."/>
            <person name="Berger A."/>
            <person name="Dooley C.M."/>
            <person name="Ersan-Urun Z."/>
            <person name="Eser C."/>
            <person name="Geiger H."/>
            <person name="Geisler M."/>
            <person name="Karotki L."/>
            <person name="Kirn A."/>
            <person name="Konantz J."/>
            <person name="Konantz M."/>
            <person name="Oberlander M."/>
            <person name="Rudolph-Geiger S."/>
            <person name="Teucke M."/>
            <person name="Lanz C."/>
            <person name="Raddatz G."/>
            <person name="Osoegawa K."/>
            <person name="Zhu B."/>
            <person name="Rapp A."/>
            <person name="Widaa S."/>
            <person name="Langford C."/>
            <person name="Yang F."/>
            <person name="Schuster S.C."/>
            <person name="Carter N.P."/>
            <person name="Harrow J."/>
            <person name="Ning Z."/>
            <person name="Herrero J."/>
            <person name="Searle S.M."/>
            <person name="Enright A."/>
            <person name="Geisler R."/>
            <person name="Plasterk R.H."/>
            <person name="Lee C."/>
            <person name="Westerfield M."/>
            <person name="de Jong P.J."/>
            <person name="Zon L.I."/>
            <person name="Postlethwait J.H."/>
            <person name="Nusslein-Volhard C."/>
            <person name="Hubbard T.J."/>
            <person name="Roest Crollius H."/>
            <person name="Rogers J."/>
            <person name="Stemple D.L."/>
        </authorList>
    </citation>
    <scope>NUCLEOTIDE SEQUENCE [LARGE SCALE GENOMIC DNA]</scope>
    <source>
        <strain>Tuebingen</strain>
    </source>
</reference>
<reference key="3">
    <citation type="submission" date="2006-12" db="EMBL/GenBank/DDBJ databases">
        <authorList>
            <consortium name="NIH - Zebrafish Gene Collection (ZGC) project"/>
        </authorList>
    </citation>
    <scope>NUCLEOTIDE SEQUENCE [LARGE SCALE MRNA] OF 1-309</scope>
    <source>
        <tissue>Testis</tissue>
    </source>
</reference>
<protein>
    <recommendedName>
        <fullName>Nipped-B-like protein B</fullName>
    </recommendedName>
</protein>
<comment type="function">
    <text evidence="2 4">May play a structural role in chromatin. Involved in sister chromatid cohesion, possibly by facilitating the cohesin complex loading (PubMed:22039349). Transcription factor, which may promote cortical neuron migration during brain development by regulating the transcription of crucial genes in this process (By similarity).</text>
</comment>
<comment type="subcellular location">
    <subcellularLocation>
        <location evidence="2">Nucleus</location>
    </subcellularLocation>
</comment>
<comment type="alternative products">
    <event type="alternative splicing"/>
    <isoform>
        <id>F1QBY1-1</id>
        <name>1</name>
        <sequence type="displayed"/>
    </isoform>
    <isoform>
        <id>F1QBY1-2</id>
        <name>2</name>
        <sequence type="described" ref="VSP_044330 VSP_044331"/>
    </isoform>
</comment>
<comment type="developmental stage">
    <text evidence="4">Detected in the early blastula, 2.5 hours post fertilization (hpf), before the onset of zygotic gene expression, and expression progressively increases, reaching a peak at late gastrula stages (9 hpf), before decreasing by 26 hpf. Maternal transcripts are detected throughout the blastoderm. Ubiquitous expression continues until early somitogenesis (12 hpf), after which transcript levels gradually decrease in the trunk (15-18 hpf), with strong expression becoming restricted to the head by 25 hpf.</text>
</comment>
<comment type="domain">
    <text evidence="1">Contains one Pro-Xaa-Val-Xaa-Leu (PxVxL) motif, which is required for interaction with chromoshadow domains. This motif requires additional residues -7, -6, +4 and +5 of the central Val which contact the chromoshadow domain (By similarity).</text>
</comment>
<comment type="similarity">
    <text evidence="5">Belongs to the SCC2/Nipped-B family.</text>
</comment>
<comment type="sequence caution" evidence="5">
    <conflict type="miscellaneous discrepancy">
        <sequence resource="EMBL-CDS" id="AAI29433"/>
    </conflict>
    <text>Contaminating sequence. Potential poly-A sequence.</text>
</comment>
<accession>F1QBY1</accession>
<accession>A1L2B2</accession>
<accession>F5HSE2</accession>
<evidence type="ECO:0000250" key="1">
    <source>
        <dbReference type="UniProtKB" id="Q6KC79"/>
    </source>
</evidence>
<evidence type="ECO:0000250" key="2">
    <source>
        <dbReference type="UniProtKB" id="Q6KCD5"/>
    </source>
</evidence>
<evidence type="ECO:0000256" key="3">
    <source>
        <dbReference type="SAM" id="MobiDB-lite"/>
    </source>
</evidence>
<evidence type="ECO:0000269" key="4">
    <source>
    </source>
</evidence>
<evidence type="ECO:0000305" key="5"/>
<keyword id="KW-0010">Activator</keyword>
<keyword id="KW-0025">Alternative splicing</keyword>
<keyword id="KW-0131">Cell cycle</keyword>
<keyword id="KW-0217">Developmental protein</keyword>
<keyword id="KW-0539">Nucleus</keyword>
<keyword id="KW-1185">Reference proteome</keyword>
<keyword id="KW-0677">Repeat</keyword>
<keyword id="KW-0804">Transcription</keyword>
<keyword id="KW-0805">Transcription regulation</keyword>
<feature type="chain" id="PRO_0000419687" description="Nipped-B-like protein B">
    <location>
        <begin position="1"/>
        <end position="2876"/>
    </location>
</feature>
<feature type="repeat" description="HEAT 1">
    <location>
        <begin position="1803"/>
        <end position="1841"/>
    </location>
</feature>
<feature type="repeat" description="HEAT 2">
    <location>
        <begin position="1879"/>
        <end position="1917"/>
    </location>
</feature>
<feature type="repeat" description="HEAT 3">
    <location>
        <begin position="1981"/>
        <end position="2020"/>
    </location>
</feature>
<feature type="repeat" description="HEAT 4">
    <location>
        <begin position="2203"/>
        <end position="2241"/>
    </location>
</feature>
<feature type="repeat" description="HEAT 5">
    <location>
        <begin position="2349"/>
        <end position="2387"/>
    </location>
</feature>
<feature type="region of interest" description="Disordered" evidence="3">
    <location>
        <begin position="124"/>
        <end position="197"/>
    </location>
</feature>
<feature type="region of interest" description="Disordered" evidence="3">
    <location>
        <begin position="246"/>
        <end position="367"/>
    </location>
</feature>
<feature type="region of interest" description="Disordered" evidence="3">
    <location>
        <begin position="439"/>
        <end position="494"/>
    </location>
</feature>
<feature type="region of interest" description="Disordered" evidence="3">
    <location>
        <begin position="525"/>
        <end position="1017"/>
    </location>
</feature>
<feature type="region of interest" description="Disordered" evidence="3">
    <location>
        <begin position="1088"/>
        <end position="1229"/>
    </location>
</feature>
<feature type="region of interest" description="Disordered" evidence="3">
    <location>
        <begin position="1724"/>
        <end position="1747"/>
    </location>
</feature>
<feature type="region of interest" description="Disordered" evidence="3">
    <location>
        <begin position="2516"/>
        <end position="2590"/>
    </location>
</feature>
<feature type="region of interest" description="Disordered" evidence="3">
    <location>
        <begin position="2728"/>
        <end position="2774"/>
    </location>
</feature>
<feature type="short sequence motif" description="PxVxL motif" evidence="1">
    <location>
        <begin position="1068"/>
        <end position="1081"/>
    </location>
</feature>
<feature type="compositionally biased region" description="Polar residues" evidence="3">
    <location>
        <begin position="124"/>
        <end position="142"/>
    </location>
</feature>
<feature type="compositionally biased region" description="Polar residues" evidence="3">
    <location>
        <begin position="149"/>
        <end position="167"/>
    </location>
</feature>
<feature type="compositionally biased region" description="Pro residues" evidence="3">
    <location>
        <begin position="276"/>
        <end position="290"/>
    </location>
</feature>
<feature type="compositionally biased region" description="Basic and acidic residues" evidence="3">
    <location>
        <begin position="439"/>
        <end position="457"/>
    </location>
</feature>
<feature type="compositionally biased region" description="Low complexity" evidence="3">
    <location>
        <begin position="471"/>
        <end position="480"/>
    </location>
</feature>
<feature type="compositionally biased region" description="Gly residues" evidence="3">
    <location>
        <begin position="481"/>
        <end position="490"/>
    </location>
</feature>
<feature type="compositionally biased region" description="Basic and acidic residues" evidence="3">
    <location>
        <begin position="556"/>
        <end position="577"/>
    </location>
</feature>
<feature type="compositionally biased region" description="Basic and acidic residues" evidence="3">
    <location>
        <begin position="586"/>
        <end position="955"/>
    </location>
</feature>
<feature type="compositionally biased region" description="Basic and acidic residues" evidence="3">
    <location>
        <begin position="962"/>
        <end position="1005"/>
    </location>
</feature>
<feature type="compositionally biased region" description="Low complexity" evidence="3">
    <location>
        <begin position="1090"/>
        <end position="1100"/>
    </location>
</feature>
<feature type="compositionally biased region" description="Basic and acidic residues" evidence="3">
    <location>
        <begin position="1104"/>
        <end position="1119"/>
    </location>
</feature>
<feature type="compositionally biased region" description="Basic and acidic residues" evidence="3">
    <location>
        <begin position="1156"/>
        <end position="1183"/>
    </location>
</feature>
<feature type="compositionally biased region" description="Basic residues" evidence="3">
    <location>
        <begin position="1212"/>
        <end position="1223"/>
    </location>
</feature>
<feature type="compositionally biased region" description="Basic residues" evidence="3">
    <location>
        <begin position="2519"/>
        <end position="2537"/>
    </location>
</feature>
<feature type="compositionally biased region" description="Low complexity" evidence="3">
    <location>
        <begin position="2548"/>
        <end position="2563"/>
    </location>
</feature>
<feature type="compositionally biased region" description="Basic and acidic residues" evidence="3">
    <location>
        <begin position="2762"/>
        <end position="2774"/>
    </location>
</feature>
<feature type="splice variant" id="VSP_044330" description="In isoform 2." evidence="5">
    <original>K</original>
    <variation>KVR</variation>
    <location>
        <position position="1557"/>
    </location>
</feature>
<feature type="splice variant" id="VSP_044331" description="In isoform 2." evidence="5">
    <original>E</original>
    <variation>EVNNR</variation>
    <location>
        <position position="1677"/>
    </location>
</feature>
<feature type="sequence conflict" description="In Ref. 3; AAI29433." evidence="5" ref="3">
    <original>A</original>
    <variation>T</variation>
    <location>
        <position position="229"/>
    </location>
</feature>
<feature type="sequence conflict" description="In Ref. 3; AAI29433." evidence="5" ref="3">
    <original>E</original>
    <variation>D</variation>
    <location>
        <position position="248"/>
    </location>
</feature>
<feature type="sequence conflict" description="In Ref. 1; BAK23967." evidence="5" ref="1">
    <original>I</original>
    <variation>K</variation>
    <location>
        <position position="594"/>
    </location>
</feature>
<feature type="sequence conflict" description="In Ref. 1; BAK23967." evidence="5" ref="1">
    <original>S</original>
    <variation>T</variation>
    <location>
        <position position="644"/>
    </location>
</feature>
<feature type="sequence conflict" description="In Ref. 1; BAK23967." evidence="5" ref="1">
    <original>S</original>
    <variation>A</variation>
    <location>
        <position position="2680"/>
    </location>
</feature>
<feature type="sequence conflict" description="In Ref. 1; BAK23967." evidence="5" ref="1">
    <original>R</original>
    <variation>K</variation>
    <location>
        <position position="2759"/>
    </location>
</feature>